<evidence type="ECO:0000255" key="1">
    <source>
        <dbReference type="HAMAP-Rule" id="MF_01333"/>
    </source>
</evidence>
<evidence type="ECO:0000305" key="2"/>
<sequence>MMETTENSMREIVIDKVVVNIGVGAAGERLNRAAKVLELLTHHKPAFTSAKRTVRDFNIRKGLNIGVKVTLRKDDALSFLKEAFYAKDYKIPVYSFDKNGNAYFGISDYTDFKGMKYDPDIGIFGMDIAIVFRRRGGYRIEKRRIKKMHIPKKMRISKEETIKYLQENFNVKIIGD</sequence>
<name>RL5_PICTO</name>
<reference key="1">
    <citation type="journal article" date="2004" name="Proc. Natl. Acad. Sci. U.S.A.">
        <title>Genome sequence of Picrophilus torridus and its implications for life around pH 0.</title>
        <authorList>
            <person name="Fuetterer O."/>
            <person name="Angelov A."/>
            <person name="Liesegang H."/>
            <person name="Gottschalk G."/>
            <person name="Schleper C."/>
            <person name="Schepers B."/>
            <person name="Dock C."/>
            <person name="Antranikian G."/>
            <person name="Liebl W."/>
        </authorList>
    </citation>
    <scope>NUCLEOTIDE SEQUENCE [LARGE SCALE GENOMIC DNA]</scope>
    <source>
        <strain>ATCC 700027 / DSM 9790 / JCM 10055 / NBRC 100828 / KAW 2/3</strain>
    </source>
</reference>
<proteinExistence type="inferred from homology"/>
<organism>
    <name type="scientific">Picrophilus torridus (strain ATCC 700027 / DSM 9790 / JCM 10055 / NBRC 100828 / KAW 2/3)</name>
    <dbReference type="NCBI Taxonomy" id="1122961"/>
    <lineage>
        <taxon>Archaea</taxon>
        <taxon>Methanobacteriati</taxon>
        <taxon>Thermoplasmatota</taxon>
        <taxon>Thermoplasmata</taxon>
        <taxon>Thermoplasmatales</taxon>
        <taxon>Picrophilaceae</taxon>
        <taxon>Picrophilus</taxon>
    </lineage>
</organism>
<dbReference type="EMBL" id="AE017261">
    <property type="protein sequence ID" value="AAT43238.1"/>
    <property type="molecule type" value="Genomic_DNA"/>
</dbReference>
<dbReference type="RefSeq" id="WP_011177454.1">
    <property type="nucleotide sequence ID" value="NC_005877.1"/>
</dbReference>
<dbReference type="SMR" id="Q6L1B4"/>
<dbReference type="FunCoup" id="Q6L1B4">
    <property type="interactions" value="168"/>
</dbReference>
<dbReference type="STRING" id="263820.PTO0653"/>
<dbReference type="PaxDb" id="263820-PTO0653"/>
<dbReference type="GeneID" id="2844301"/>
<dbReference type="KEGG" id="pto:PTO0653"/>
<dbReference type="PATRIC" id="fig|263820.9.peg.686"/>
<dbReference type="eggNOG" id="arCOG04092">
    <property type="taxonomic scope" value="Archaea"/>
</dbReference>
<dbReference type="HOGENOM" id="CLU_061015_3_0_2"/>
<dbReference type="InParanoid" id="Q6L1B4"/>
<dbReference type="OrthoDB" id="372044at2157"/>
<dbReference type="Proteomes" id="UP000000438">
    <property type="component" value="Chromosome"/>
</dbReference>
<dbReference type="GO" id="GO:1990904">
    <property type="term" value="C:ribonucleoprotein complex"/>
    <property type="evidence" value="ECO:0007669"/>
    <property type="project" value="UniProtKB-KW"/>
</dbReference>
<dbReference type="GO" id="GO:0005840">
    <property type="term" value="C:ribosome"/>
    <property type="evidence" value="ECO:0007669"/>
    <property type="project" value="UniProtKB-KW"/>
</dbReference>
<dbReference type="GO" id="GO:0019843">
    <property type="term" value="F:rRNA binding"/>
    <property type="evidence" value="ECO:0007669"/>
    <property type="project" value="UniProtKB-UniRule"/>
</dbReference>
<dbReference type="GO" id="GO:0003735">
    <property type="term" value="F:structural constituent of ribosome"/>
    <property type="evidence" value="ECO:0007669"/>
    <property type="project" value="InterPro"/>
</dbReference>
<dbReference type="GO" id="GO:0000049">
    <property type="term" value="F:tRNA binding"/>
    <property type="evidence" value="ECO:0007669"/>
    <property type="project" value="UniProtKB-UniRule"/>
</dbReference>
<dbReference type="GO" id="GO:0006412">
    <property type="term" value="P:translation"/>
    <property type="evidence" value="ECO:0007669"/>
    <property type="project" value="UniProtKB-UniRule"/>
</dbReference>
<dbReference type="FunFam" id="3.30.1440.10:FF:000002">
    <property type="entry name" value="60S ribosomal protein L11"/>
    <property type="match status" value="1"/>
</dbReference>
<dbReference type="Gene3D" id="3.30.1440.10">
    <property type="match status" value="1"/>
</dbReference>
<dbReference type="HAMAP" id="MF_01333_A">
    <property type="entry name" value="Ribosomal_uL5_A"/>
    <property type="match status" value="1"/>
</dbReference>
<dbReference type="InterPro" id="IPR002132">
    <property type="entry name" value="Ribosomal_uL5"/>
</dbReference>
<dbReference type="InterPro" id="IPR022804">
    <property type="entry name" value="Ribosomal_uL5_arc"/>
</dbReference>
<dbReference type="InterPro" id="IPR031309">
    <property type="entry name" value="Ribosomal_uL5_C"/>
</dbReference>
<dbReference type="InterPro" id="IPR022803">
    <property type="entry name" value="Ribosomal_uL5_dom_sf"/>
</dbReference>
<dbReference type="InterPro" id="IPR031310">
    <property type="entry name" value="Ribosomal_uL5_N"/>
</dbReference>
<dbReference type="NCBIfam" id="NF003258">
    <property type="entry name" value="PRK04219.1"/>
    <property type="match status" value="1"/>
</dbReference>
<dbReference type="PANTHER" id="PTHR11994">
    <property type="entry name" value="60S RIBOSOMAL PROTEIN L11-RELATED"/>
    <property type="match status" value="1"/>
</dbReference>
<dbReference type="Pfam" id="PF00281">
    <property type="entry name" value="Ribosomal_L5"/>
    <property type="match status" value="1"/>
</dbReference>
<dbReference type="Pfam" id="PF00673">
    <property type="entry name" value="Ribosomal_L5_C"/>
    <property type="match status" value="1"/>
</dbReference>
<dbReference type="PIRSF" id="PIRSF002161">
    <property type="entry name" value="Ribosomal_L5"/>
    <property type="match status" value="1"/>
</dbReference>
<dbReference type="SUPFAM" id="SSF55282">
    <property type="entry name" value="RL5-like"/>
    <property type="match status" value="1"/>
</dbReference>
<keyword id="KW-0687">Ribonucleoprotein</keyword>
<keyword id="KW-0689">Ribosomal protein</keyword>
<keyword id="KW-0694">RNA-binding</keyword>
<keyword id="KW-0699">rRNA-binding</keyword>
<keyword id="KW-0820">tRNA-binding</keyword>
<comment type="function">
    <text evidence="1">This is one of the proteins that bind and probably mediate the attachment of the 5S RNA into the large ribosomal subunit, where it forms part of the central protuberance. In the 70S ribosome it contacts protein S13 of the 30S subunit (bridge B1b), connecting the 2 subunits; this bridge is implicated in subunit movement. May contact the P site tRNA; the 5S rRNA and some of its associated proteins might help stabilize positioning of ribosome-bound tRNAs.</text>
</comment>
<comment type="subunit">
    <text evidence="1">Part of the 50S ribosomal subunit; contacts the 5S rRNA and probably tRNA. Forms a bridge to the 30S subunit in the 70S ribosome.</text>
</comment>
<comment type="similarity">
    <text evidence="1">Belongs to the universal ribosomal protein uL5 family.</text>
</comment>
<gene>
    <name evidence="1" type="primary">rpl5</name>
    <name type="ordered locus">PTO0653</name>
</gene>
<feature type="chain" id="PRO_0000243101" description="Large ribosomal subunit protein uL5">
    <location>
        <begin position="1"/>
        <end position="176"/>
    </location>
</feature>
<accession>Q6L1B4</accession>
<protein>
    <recommendedName>
        <fullName evidence="1">Large ribosomal subunit protein uL5</fullName>
    </recommendedName>
    <alternativeName>
        <fullName evidence="2">50S ribosomal protein L5</fullName>
    </alternativeName>
</protein>